<feature type="chain" id="PRO_1000202427" description="N-acetylmuramic acid 6-phosphate etherase">
    <location>
        <begin position="1"/>
        <end position="298"/>
    </location>
</feature>
<feature type="domain" description="SIS" evidence="1">
    <location>
        <begin position="55"/>
        <end position="218"/>
    </location>
</feature>
<feature type="active site" description="Proton donor" evidence="1">
    <location>
        <position position="83"/>
    </location>
</feature>
<feature type="active site" evidence="1">
    <location>
        <position position="114"/>
    </location>
</feature>
<dbReference type="EC" id="4.2.1.126" evidence="1"/>
<dbReference type="EMBL" id="CP001396">
    <property type="protein sequence ID" value="ACR65056.1"/>
    <property type="molecule type" value="Genomic_DNA"/>
</dbReference>
<dbReference type="RefSeq" id="WP_001159160.1">
    <property type="nucleotide sequence ID" value="NC_012759.1"/>
</dbReference>
<dbReference type="SMR" id="C4ZVV9"/>
<dbReference type="KEGG" id="ebw:BWG_2190"/>
<dbReference type="HOGENOM" id="CLU_049049_1_1_6"/>
<dbReference type="UniPathway" id="UPA00342"/>
<dbReference type="UniPathway" id="UPA00343"/>
<dbReference type="UniPathway" id="UPA00544"/>
<dbReference type="GO" id="GO:0097367">
    <property type="term" value="F:carbohydrate derivative binding"/>
    <property type="evidence" value="ECO:0007669"/>
    <property type="project" value="InterPro"/>
</dbReference>
<dbReference type="GO" id="GO:0016835">
    <property type="term" value="F:carbon-oxygen lyase activity"/>
    <property type="evidence" value="ECO:0007669"/>
    <property type="project" value="UniProtKB-UniRule"/>
</dbReference>
<dbReference type="GO" id="GO:0016803">
    <property type="term" value="F:ether hydrolase activity"/>
    <property type="evidence" value="ECO:0007669"/>
    <property type="project" value="TreeGrafter"/>
</dbReference>
<dbReference type="GO" id="GO:0097175">
    <property type="term" value="P:1,6-anhydro-N-acetyl-beta-muramic acid catabolic process"/>
    <property type="evidence" value="ECO:0007669"/>
    <property type="project" value="UniProtKB-UniRule"/>
</dbReference>
<dbReference type="GO" id="GO:0046348">
    <property type="term" value="P:amino sugar catabolic process"/>
    <property type="evidence" value="ECO:0007669"/>
    <property type="project" value="InterPro"/>
</dbReference>
<dbReference type="GO" id="GO:0097173">
    <property type="term" value="P:N-acetylmuramic acid catabolic process"/>
    <property type="evidence" value="ECO:0007669"/>
    <property type="project" value="UniProtKB-UniPathway"/>
</dbReference>
<dbReference type="GO" id="GO:0009254">
    <property type="term" value="P:peptidoglycan turnover"/>
    <property type="evidence" value="ECO:0007669"/>
    <property type="project" value="UniProtKB-UniRule"/>
</dbReference>
<dbReference type="CDD" id="cd05007">
    <property type="entry name" value="SIS_Etherase"/>
    <property type="match status" value="1"/>
</dbReference>
<dbReference type="FunFam" id="1.10.8.1080:FF:000001">
    <property type="entry name" value="N-acetylmuramic acid 6-phosphate etherase"/>
    <property type="match status" value="1"/>
</dbReference>
<dbReference type="FunFam" id="3.40.50.10490:FF:000014">
    <property type="entry name" value="N-acetylmuramic acid 6-phosphate etherase"/>
    <property type="match status" value="1"/>
</dbReference>
<dbReference type="Gene3D" id="1.10.8.1080">
    <property type="match status" value="1"/>
</dbReference>
<dbReference type="Gene3D" id="3.40.50.10490">
    <property type="entry name" value="Glucose-6-phosphate isomerase like protein, domain 1"/>
    <property type="match status" value="1"/>
</dbReference>
<dbReference type="HAMAP" id="MF_00068">
    <property type="entry name" value="MurQ"/>
    <property type="match status" value="1"/>
</dbReference>
<dbReference type="InterPro" id="IPR005488">
    <property type="entry name" value="Etherase_MurQ"/>
</dbReference>
<dbReference type="InterPro" id="IPR005486">
    <property type="entry name" value="Glucokinase_regulatory_CS"/>
</dbReference>
<dbReference type="InterPro" id="IPR040190">
    <property type="entry name" value="MURQ/GCKR"/>
</dbReference>
<dbReference type="InterPro" id="IPR001347">
    <property type="entry name" value="SIS_dom"/>
</dbReference>
<dbReference type="InterPro" id="IPR046348">
    <property type="entry name" value="SIS_dom_sf"/>
</dbReference>
<dbReference type="NCBIfam" id="TIGR00274">
    <property type="entry name" value="N-acetylmuramic acid 6-phosphate etherase"/>
    <property type="match status" value="1"/>
</dbReference>
<dbReference type="NCBIfam" id="NF003915">
    <property type="entry name" value="PRK05441.1"/>
    <property type="match status" value="1"/>
</dbReference>
<dbReference type="NCBIfam" id="NF009222">
    <property type="entry name" value="PRK12570.1"/>
    <property type="match status" value="1"/>
</dbReference>
<dbReference type="PANTHER" id="PTHR10088">
    <property type="entry name" value="GLUCOKINASE REGULATORY PROTEIN"/>
    <property type="match status" value="1"/>
</dbReference>
<dbReference type="PANTHER" id="PTHR10088:SF4">
    <property type="entry name" value="GLUCOKINASE REGULATORY PROTEIN"/>
    <property type="match status" value="1"/>
</dbReference>
<dbReference type="Pfam" id="PF20741">
    <property type="entry name" value="GKRP-like_C"/>
    <property type="match status" value="1"/>
</dbReference>
<dbReference type="Pfam" id="PF22645">
    <property type="entry name" value="GKRP_SIS_N"/>
    <property type="match status" value="1"/>
</dbReference>
<dbReference type="SUPFAM" id="SSF53697">
    <property type="entry name" value="SIS domain"/>
    <property type="match status" value="1"/>
</dbReference>
<dbReference type="PROSITE" id="PS01272">
    <property type="entry name" value="GCKR"/>
    <property type="match status" value="1"/>
</dbReference>
<dbReference type="PROSITE" id="PS51464">
    <property type="entry name" value="SIS"/>
    <property type="match status" value="1"/>
</dbReference>
<proteinExistence type="inferred from homology"/>
<protein>
    <recommendedName>
        <fullName evidence="1">N-acetylmuramic acid 6-phosphate etherase</fullName>
        <shortName evidence="1">MurNAc-6-P etherase</shortName>
        <ecNumber evidence="1">4.2.1.126</ecNumber>
    </recommendedName>
    <alternativeName>
        <fullName evidence="1">N-acetylmuramic acid 6-phosphate hydrolase</fullName>
    </alternativeName>
    <alternativeName>
        <fullName evidence="1">N-acetylmuramic acid 6-phosphate lyase</fullName>
    </alternativeName>
</protein>
<comment type="function">
    <text evidence="1">Specifically catalyzes the cleavage of the D-lactyl ether substituent of MurNAc 6-phosphate, producing GlcNAc 6-phosphate and D-lactate. Together with AnmK, is also required for the utilization of anhydro-N-acetylmuramic acid (anhMurNAc) either imported from the medium or derived from its own cell wall murein, and thus plays a role in cell wall recycling.</text>
</comment>
<comment type="catalytic activity">
    <reaction evidence="1">
        <text>N-acetyl-D-muramate 6-phosphate + H2O = N-acetyl-D-glucosamine 6-phosphate + (R)-lactate</text>
        <dbReference type="Rhea" id="RHEA:26410"/>
        <dbReference type="ChEBI" id="CHEBI:15377"/>
        <dbReference type="ChEBI" id="CHEBI:16004"/>
        <dbReference type="ChEBI" id="CHEBI:57513"/>
        <dbReference type="ChEBI" id="CHEBI:58722"/>
        <dbReference type="EC" id="4.2.1.126"/>
    </reaction>
</comment>
<comment type="pathway">
    <text evidence="1">Amino-sugar metabolism; N-acetylmuramate degradation.</text>
</comment>
<comment type="pathway">
    <text evidence="1">Amino-sugar metabolism; 1,6-anhydro-N-acetylmuramate degradation.</text>
</comment>
<comment type="pathway">
    <text evidence="1">Cell wall biogenesis; peptidoglycan recycling.</text>
</comment>
<comment type="subunit">
    <text evidence="1">Homodimer.</text>
</comment>
<comment type="induction">
    <text evidence="1">Induced by MurNAc 6-phosphate that releases the repressor MurR from the DNA. Repressed by MurR in the absence of MurNAc 6-phosphate.</text>
</comment>
<comment type="miscellaneous">
    <text evidence="1">A lyase-type mechanism (elimination/hydration) is suggested for the cleavage of the lactyl ether bond of MurNAc 6-phosphate, with the formation of an alpha,beta-unsaturated aldehyde intermediate with (E)-stereochemistry, followed by the syn addition of water to give product.</text>
</comment>
<comment type="similarity">
    <text evidence="1">Belongs to the GCKR-like family. MurNAc-6-P etherase subfamily.</text>
</comment>
<accession>C4ZVV9</accession>
<evidence type="ECO:0000255" key="1">
    <source>
        <dbReference type="HAMAP-Rule" id="MF_00068"/>
    </source>
</evidence>
<gene>
    <name evidence="1" type="primary">murQ</name>
    <name type="ordered locus">BWG_2190</name>
</gene>
<sequence>MQFEKMITEGSNTASAEIDRVSTLEMCRIINDEDKTVPLAVERVLPDIAAAIDVIHAQVSGGGRLIYLGAGTSGRLGILDASECPPTYGVKPGLVVGLIAGGEYAIQHAVEGAEDSREGGVNDLKNINLTAQDVVVGIAASGRTPYVIAGLEYARQLGCRTVGISCNPGSAVSTTAEFAITPIVGAEVVTGSSRMKAGTAQKLVLNMLSTGLMIKSGKVFGNLMVDVVATNEKLHVRQVNIVKNATGCSAEQAEAALIACERNCKTAIVMVLKNLDAAEAKKRLDQHGGFIRQVLDKE</sequence>
<organism>
    <name type="scientific">Escherichia coli (strain K12 / MC4100 / BW2952)</name>
    <dbReference type="NCBI Taxonomy" id="595496"/>
    <lineage>
        <taxon>Bacteria</taxon>
        <taxon>Pseudomonadati</taxon>
        <taxon>Pseudomonadota</taxon>
        <taxon>Gammaproteobacteria</taxon>
        <taxon>Enterobacterales</taxon>
        <taxon>Enterobacteriaceae</taxon>
        <taxon>Escherichia</taxon>
    </lineage>
</organism>
<keyword id="KW-0119">Carbohydrate metabolism</keyword>
<keyword id="KW-0456">Lyase</keyword>
<reference key="1">
    <citation type="journal article" date="2009" name="J. Bacteriol.">
        <title>Genomic sequencing reveals regulatory mutations and recombinational events in the widely used MC4100 lineage of Escherichia coli K-12.</title>
        <authorList>
            <person name="Ferenci T."/>
            <person name="Zhou Z."/>
            <person name="Betteridge T."/>
            <person name="Ren Y."/>
            <person name="Liu Y."/>
            <person name="Feng L."/>
            <person name="Reeves P.R."/>
            <person name="Wang L."/>
        </authorList>
    </citation>
    <scope>NUCLEOTIDE SEQUENCE [LARGE SCALE GENOMIC DNA]</scope>
    <source>
        <strain>K12 / MC4100 / BW2952</strain>
    </source>
</reference>
<name>MURQ_ECOBW</name>